<accession>A6QG53</accession>
<evidence type="ECO:0000255" key="1">
    <source>
        <dbReference type="HAMAP-Rule" id="MF_00258"/>
    </source>
</evidence>
<organism>
    <name type="scientific">Staphylococcus aureus (strain Newman)</name>
    <dbReference type="NCBI Taxonomy" id="426430"/>
    <lineage>
        <taxon>Bacteria</taxon>
        <taxon>Bacillati</taxon>
        <taxon>Bacillota</taxon>
        <taxon>Bacilli</taxon>
        <taxon>Bacillales</taxon>
        <taxon>Staphylococcaceae</taxon>
        <taxon>Staphylococcus</taxon>
    </lineage>
</organism>
<sequence length="266" mass="29698">MNKPIGVIDSGVGGLTVAKEIMRQLPNETIYYLGDIGRCPYGPRPGEQVKQYTVEIARKLMEFDIKMLVIACNTATAVALEYLQKTLSIPVIGVIEPGARTAIMTTRNQNVLVLGTEGTIKSEAYRTHIKRINPHVEVHGVACPGFVPLVEQMRYSDPTITSIVIHQTLKRWRNSESDTVILGCTHYPLLYKPIYDYFGGKKTVISSGLETAREVSALLTFSNEHASYTEHPDHRFFATGDPTHITNIIKEWLNLSVNVERISVND</sequence>
<keyword id="KW-0133">Cell shape</keyword>
<keyword id="KW-0961">Cell wall biogenesis/degradation</keyword>
<keyword id="KW-0413">Isomerase</keyword>
<keyword id="KW-0573">Peptidoglycan synthesis</keyword>
<name>MURI_STAAE</name>
<dbReference type="EC" id="5.1.1.3" evidence="1"/>
<dbReference type="EMBL" id="AP009351">
    <property type="protein sequence ID" value="BAF67335.1"/>
    <property type="molecule type" value="Genomic_DNA"/>
</dbReference>
<dbReference type="SMR" id="A6QG53"/>
<dbReference type="KEGG" id="sae:NWMN_1063"/>
<dbReference type="HOGENOM" id="CLU_052344_0_2_9"/>
<dbReference type="UniPathway" id="UPA00219"/>
<dbReference type="Proteomes" id="UP000006386">
    <property type="component" value="Chromosome"/>
</dbReference>
<dbReference type="GO" id="GO:0008881">
    <property type="term" value="F:glutamate racemase activity"/>
    <property type="evidence" value="ECO:0007669"/>
    <property type="project" value="UniProtKB-UniRule"/>
</dbReference>
<dbReference type="GO" id="GO:0071555">
    <property type="term" value="P:cell wall organization"/>
    <property type="evidence" value="ECO:0007669"/>
    <property type="project" value="UniProtKB-KW"/>
</dbReference>
<dbReference type="GO" id="GO:0009252">
    <property type="term" value="P:peptidoglycan biosynthetic process"/>
    <property type="evidence" value="ECO:0007669"/>
    <property type="project" value="UniProtKB-UniRule"/>
</dbReference>
<dbReference type="GO" id="GO:0008360">
    <property type="term" value="P:regulation of cell shape"/>
    <property type="evidence" value="ECO:0007669"/>
    <property type="project" value="UniProtKB-KW"/>
</dbReference>
<dbReference type="FunFam" id="3.40.50.1860:FF:000002">
    <property type="entry name" value="Glutamate racemase"/>
    <property type="match status" value="1"/>
</dbReference>
<dbReference type="Gene3D" id="3.40.50.1860">
    <property type="match status" value="2"/>
</dbReference>
<dbReference type="HAMAP" id="MF_00258">
    <property type="entry name" value="Glu_racemase"/>
    <property type="match status" value="1"/>
</dbReference>
<dbReference type="InterPro" id="IPR015942">
    <property type="entry name" value="Asp/Glu/hydantoin_racemase"/>
</dbReference>
<dbReference type="InterPro" id="IPR001920">
    <property type="entry name" value="Asp/Glu_race"/>
</dbReference>
<dbReference type="InterPro" id="IPR018187">
    <property type="entry name" value="Asp/Glu_racemase_AS_1"/>
</dbReference>
<dbReference type="InterPro" id="IPR033134">
    <property type="entry name" value="Asp/Glu_racemase_AS_2"/>
</dbReference>
<dbReference type="InterPro" id="IPR004391">
    <property type="entry name" value="Glu_race"/>
</dbReference>
<dbReference type="NCBIfam" id="TIGR00067">
    <property type="entry name" value="glut_race"/>
    <property type="match status" value="1"/>
</dbReference>
<dbReference type="NCBIfam" id="NF002035">
    <property type="entry name" value="PRK00865.1-3"/>
    <property type="match status" value="1"/>
</dbReference>
<dbReference type="PANTHER" id="PTHR21198">
    <property type="entry name" value="GLUTAMATE RACEMASE"/>
    <property type="match status" value="1"/>
</dbReference>
<dbReference type="PANTHER" id="PTHR21198:SF2">
    <property type="entry name" value="GLUTAMATE RACEMASE"/>
    <property type="match status" value="1"/>
</dbReference>
<dbReference type="Pfam" id="PF01177">
    <property type="entry name" value="Asp_Glu_race"/>
    <property type="match status" value="1"/>
</dbReference>
<dbReference type="SUPFAM" id="SSF53681">
    <property type="entry name" value="Aspartate/glutamate racemase"/>
    <property type="match status" value="2"/>
</dbReference>
<dbReference type="PROSITE" id="PS00923">
    <property type="entry name" value="ASP_GLU_RACEMASE_1"/>
    <property type="match status" value="1"/>
</dbReference>
<dbReference type="PROSITE" id="PS00924">
    <property type="entry name" value="ASP_GLU_RACEMASE_2"/>
    <property type="match status" value="1"/>
</dbReference>
<protein>
    <recommendedName>
        <fullName evidence="1">Glutamate racemase</fullName>
        <ecNumber evidence="1">5.1.1.3</ecNumber>
    </recommendedName>
</protein>
<comment type="function">
    <text evidence="1">Provides the (R)-glutamate required for cell wall biosynthesis.</text>
</comment>
<comment type="catalytic activity">
    <reaction evidence="1">
        <text>L-glutamate = D-glutamate</text>
        <dbReference type="Rhea" id="RHEA:12813"/>
        <dbReference type="ChEBI" id="CHEBI:29985"/>
        <dbReference type="ChEBI" id="CHEBI:29986"/>
        <dbReference type="EC" id="5.1.1.3"/>
    </reaction>
</comment>
<comment type="pathway">
    <text evidence="1">Cell wall biogenesis; peptidoglycan biosynthesis.</text>
</comment>
<comment type="similarity">
    <text evidence="1">Belongs to the aspartate/glutamate racemases family.</text>
</comment>
<proteinExistence type="inferred from homology"/>
<gene>
    <name evidence="1" type="primary">murI</name>
    <name type="ordered locus">NWMN_1063</name>
</gene>
<reference key="1">
    <citation type="journal article" date="2008" name="J. Bacteriol.">
        <title>Genome sequence of Staphylococcus aureus strain Newman and comparative analysis of staphylococcal genomes: polymorphism and evolution of two major pathogenicity islands.</title>
        <authorList>
            <person name="Baba T."/>
            <person name="Bae T."/>
            <person name="Schneewind O."/>
            <person name="Takeuchi F."/>
            <person name="Hiramatsu K."/>
        </authorList>
    </citation>
    <scope>NUCLEOTIDE SEQUENCE [LARGE SCALE GENOMIC DNA]</scope>
    <source>
        <strain>Newman</strain>
    </source>
</reference>
<feature type="chain" id="PRO_1000071883" description="Glutamate racemase">
    <location>
        <begin position="1"/>
        <end position="266"/>
    </location>
</feature>
<feature type="active site" description="Proton donor/acceptor" evidence="1">
    <location>
        <position position="72"/>
    </location>
</feature>
<feature type="active site" description="Proton donor/acceptor" evidence="1">
    <location>
        <position position="184"/>
    </location>
</feature>
<feature type="binding site" evidence="1">
    <location>
        <begin position="9"/>
        <end position="10"/>
    </location>
    <ligand>
        <name>substrate</name>
    </ligand>
</feature>
<feature type="binding site" evidence="1">
    <location>
        <begin position="41"/>
        <end position="42"/>
    </location>
    <ligand>
        <name>substrate</name>
    </ligand>
</feature>
<feature type="binding site" evidence="1">
    <location>
        <begin position="73"/>
        <end position="74"/>
    </location>
    <ligand>
        <name>substrate</name>
    </ligand>
</feature>
<feature type="binding site" evidence="1">
    <location>
        <begin position="185"/>
        <end position="186"/>
    </location>
    <ligand>
        <name>substrate</name>
    </ligand>
</feature>